<name>Y1966_KLEP3</name>
<protein>
    <recommendedName>
        <fullName evidence="1">UPF0181 protein KPK_1966</fullName>
    </recommendedName>
</protein>
<reference key="1">
    <citation type="journal article" date="2008" name="PLoS Genet.">
        <title>Complete genome sequence of the N2-fixing broad host range endophyte Klebsiella pneumoniae 342 and virulence predictions verified in mice.</title>
        <authorList>
            <person name="Fouts D.E."/>
            <person name="Tyler H.L."/>
            <person name="DeBoy R.T."/>
            <person name="Daugherty S."/>
            <person name="Ren Q."/>
            <person name="Badger J.H."/>
            <person name="Durkin A.S."/>
            <person name="Huot H."/>
            <person name="Shrivastava S."/>
            <person name="Kothari S."/>
            <person name="Dodson R.J."/>
            <person name="Mohamoud Y."/>
            <person name="Khouri H."/>
            <person name="Roesch L.F.W."/>
            <person name="Krogfelt K.A."/>
            <person name="Struve C."/>
            <person name="Triplett E.W."/>
            <person name="Methe B.A."/>
        </authorList>
    </citation>
    <scope>NUCLEOTIDE SEQUENCE [LARGE SCALE GENOMIC DNA]</scope>
    <source>
        <strain>342</strain>
    </source>
</reference>
<dbReference type="EMBL" id="CP000964">
    <property type="protein sequence ID" value="ACI06810.1"/>
    <property type="molecule type" value="Genomic_DNA"/>
</dbReference>
<dbReference type="SMR" id="B5XQ62"/>
<dbReference type="KEGG" id="kpe:KPK_1966"/>
<dbReference type="HOGENOM" id="CLU_185263_0_0_6"/>
<dbReference type="BioCyc" id="KPNE507522:GI0B-1960-MONOMER"/>
<dbReference type="Proteomes" id="UP000001734">
    <property type="component" value="Chromosome"/>
</dbReference>
<dbReference type="HAMAP" id="MF_00507">
    <property type="entry name" value="UPF0181"/>
    <property type="match status" value="1"/>
</dbReference>
<dbReference type="InterPro" id="IPR005371">
    <property type="entry name" value="UPF0181"/>
</dbReference>
<dbReference type="NCBIfam" id="NF003476">
    <property type="entry name" value="PRK05114.1"/>
    <property type="match status" value="1"/>
</dbReference>
<dbReference type="Pfam" id="PF03701">
    <property type="entry name" value="UPF0181"/>
    <property type="match status" value="1"/>
</dbReference>
<accession>B5XQ62</accession>
<gene>
    <name type="ordered locus">KPK_1966</name>
</gene>
<feature type="chain" id="PRO_1000127051" description="UPF0181 protein KPK_1966">
    <location>
        <begin position="1"/>
        <end position="67"/>
    </location>
</feature>
<feature type="region of interest" description="Disordered" evidence="2">
    <location>
        <begin position="48"/>
        <end position="67"/>
    </location>
</feature>
<feature type="compositionally biased region" description="Acidic residues" evidence="2">
    <location>
        <begin position="55"/>
        <end position="67"/>
    </location>
</feature>
<comment type="similarity">
    <text evidence="1">Belongs to the UPF0181 family.</text>
</comment>
<proteinExistence type="inferred from homology"/>
<evidence type="ECO:0000255" key="1">
    <source>
        <dbReference type="HAMAP-Rule" id="MF_00507"/>
    </source>
</evidence>
<evidence type="ECO:0000256" key="2">
    <source>
        <dbReference type="SAM" id="MobiDB-lite"/>
    </source>
</evidence>
<organism>
    <name type="scientific">Klebsiella pneumoniae (strain 342)</name>
    <dbReference type="NCBI Taxonomy" id="507522"/>
    <lineage>
        <taxon>Bacteria</taxon>
        <taxon>Pseudomonadati</taxon>
        <taxon>Pseudomonadota</taxon>
        <taxon>Gammaproteobacteria</taxon>
        <taxon>Enterobacterales</taxon>
        <taxon>Enterobacteriaceae</taxon>
        <taxon>Klebsiella/Raoultella group</taxon>
        <taxon>Klebsiella</taxon>
        <taxon>Klebsiella pneumoniae complex</taxon>
    </lineage>
</organism>
<sequence length="67" mass="7484">MFAGLPSLSHEQQQKAVERIHELMAQGMSSGQAIALVAEELRATHTGEQIVARFEDEDEDQDEDEDD</sequence>